<feature type="chain" id="PRO_1000214344" description="Small ribosomal subunit protein uS3">
    <location>
        <begin position="1"/>
        <end position="215"/>
    </location>
</feature>
<feature type="domain" description="KH type-2" evidence="1">
    <location>
        <begin position="38"/>
        <end position="107"/>
    </location>
</feature>
<name>RS3_KOSOT</name>
<proteinExistence type="inferred from homology"/>
<keyword id="KW-1185">Reference proteome</keyword>
<keyword id="KW-0687">Ribonucleoprotein</keyword>
<keyword id="KW-0689">Ribosomal protein</keyword>
<keyword id="KW-0694">RNA-binding</keyword>
<keyword id="KW-0699">rRNA-binding</keyword>
<comment type="function">
    <text evidence="1">Binds the lower part of the 30S subunit head. Binds mRNA in the 70S ribosome, positioning it for translation.</text>
</comment>
<comment type="subunit">
    <text evidence="1">Part of the 30S ribosomal subunit. Forms a tight complex with proteins S10 and S14.</text>
</comment>
<comment type="similarity">
    <text evidence="1">Belongs to the universal ribosomal protein uS3 family.</text>
</comment>
<evidence type="ECO:0000255" key="1">
    <source>
        <dbReference type="HAMAP-Rule" id="MF_01309"/>
    </source>
</evidence>
<evidence type="ECO:0000305" key="2"/>
<sequence>MGQKVHPYGFRLGISKDWKARWINEKNYKEYLLEDLKIRDYIKKTYHSAGVSDIFIERPEPGKVSITIKCARPGVIIGRKGSEVKKLRAGLERLINRKFQLNIEEVKTPETDALLVAEDIASRIEKRASYKRAMKRAIFTAMRKGAKGIKIMVSGRLNGAEIARTEWYLEGRLPLQTLKSDIDYGYTTALTKMGIIGVRVWIYKGDVAQKKATEA</sequence>
<protein>
    <recommendedName>
        <fullName evidence="1">Small ribosomal subunit protein uS3</fullName>
    </recommendedName>
    <alternativeName>
        <fullName evidence="2">30S ribosomal protein S3</fullName>
    </alternativeName>
</protein>
<accession>C5CGQ8</accession>
<dbReference type="EMBL" id="CP001634">
    <property type="protein sequence ID" value="ACR80577.1"/>
    <property type="molecule type" value="Genomic_DNA"/>
</dbReference>
<dbReference type="RefSeq" id="WP_015869220.1">
    <property type="nucleotide sequence ID" value="NC_012785.1"/>
</dbReference>
<dbReference type="SMR" id="C5CGQ8"/>
<dbReference type="STRING" id="521045.Kole_1896"/>
<dbReference type="KEGG" id="kol:Kole_1896"/>
<dbReference type="eggNOG" id="COG0092">
    <property type="taxonomic scope" value="Bacteria"/>
</dbReference>
<dbReference type="HOGENOM" id="CLU_058591_0_2_0"/>
<dbReference type="OrthoDB" id="9806396at2"/>
<dbReference type="Proteomes" id="UP000002382">
    <property type="component" value="Chromosome"/>
</dbReference>
<dbReference type="GO" id="GO:0022627">
    <property type="term" value="C:cytosolic small ribosomal subunit"/>
    <property type="evidence" value="ECO:0007669"/>
    <property type="project" value="TreeGrafter"/>
</dbReference>
<dbReference type="GO" id="GO:0003729">
    <property type="term" value="F:mRNA binding"/>
    <property type="evidence" value="ECO:0007669"/>
    <property type="project" value="UniProtKB-UniRule"/>
</dbReference>
<dbReference type="GO" id="GO:0019843">
    <property type="term" value="F:rRNA binding"/>
    <property type="evidence" value="ECO:0007669"/>
    <property type="project" value="UniProtKB-UniRule"/>
</dbReference>
<dbReference type="GO" id="GO:0003735">
    <property type="term" value="F:structural constituent of ribosome"/>
    <property type="evidence" value="ECO:0007669"/>
    <property type="project" value="InterPro"/>
</dbReference>
<dbReference type="GO" id="GO:0006412">
    <property type="term" value="P:translation"/>
    <property type="evidence" value="ECO:0007669"/>
    <property type="project" value="UniProtKB-UniRule"/>
</dbReference>
<dbReference type="CDD" id="cd02412">
    <property type="entry name" value="KH-II_30S_S3"/>
    <property type="match status" value="1"/>
</dbReference>
<dbReference type="FunFam" id="3.30.300.20:FF:000001">
    <property type="entry name" value="30S ribosomal protein S3"/>
    <property type="match status" value="1"/>
</dbReference>
<dbReference type="Gene3D" id="3.30.300.20">
    <property type="match status" value="1"/>
</dbReference>
<dbReference type="Gene3D" id="3.30.1140.32">
    <property type="entry name" value="Ribosomal protein S3, C-terminal domain"/>
    <property type="match status" value="1"/>
</dbReference>
<dbReference type="HAMAP" id="MF_01309_B">
    <property type="entry name" value="Ribosomal_uS3_B"/>
    <property type="match status" value="1"/>
</dbReference>
<dbReference type="InterPro" id="IPR004087">
    <property type="entry name" value="KH_dom"/>
</dbReference>
<dbReference type="InterPro" id="IPR015946">
    <property type="entry name" value="KH_dom-like_a/b"/>
</dbReference>
<dbReference type="InterPro" id="IPR004044">
    <property type="entry name" value="KH_dom_type_2"/>
</dbReference>
<dbReference type="InterPro" id="IPR009019">
    <property type="entry name" value="KH_sf_prok-type"/>
</dbReference>
<dbReference type="InterPro" id="IPR036419">
    <property type="entry name" value="Ribosomal_S3_C_sf"/>
</dbReference>
<dbReference type="InterPro" id="IPR005704">
    <property type="entry name" value="Ribosomal_uS3_bac-typ"/>
</dbReference>
<dbReference type="InterPro" id="IPR001351">
    <property type="entry name" value="Ribosomal_uS3_C"/>
</dbReference>
<dbReference type="InterPro" id="IPR018280">
    <property type="entry name" value="Ribosomal_uS3_CS"/>
</dbReference>
<dbReference type="NCBIfam" id="TIGR01009">
    <property type="entry name" value="rpsC_bact"/>
    <property type="match status" value="1"/>
</dbReference>
<dbReference type="PANTHER" id="PTHR11760">
    <property type="entry name" value="30S/40S RIBOSOMAL PROTEIN S3"/>
    <property type="match status" value="1"/>
</dbReference>
<dbReference type="PANTHER" id="PTHR11760:SF19">
    <property type="entry name" value="SMALL RIBOSOMAL SUBUNIT PROTEIN US3C"/>
    <property type="match status" value="1"/>
</dbReference>
<dbReference type="Pfam" id="PF07650">
    <property type="entry name" value="KH_2"/>
    <property type="match status" value="1"/>
</dbReference>
<dbReference type="Pfam" id="PF00189">
    <property type="entry name" value="Ribosomal_S3_C"/>
    <property type="match status" value="1"/>
</dbReference>
<dbReference type="SMART" id="SM00322">
    <property type="entry name" value="KH"/>
    <property type="match status" value="1"/>
</dbReference>
<dbReference type="SUPFAM" id="SSF54814">
    <property type="entry name" value="Prokaryotic type KH domain (KH-domain type II)"/>
    <property type="match status" value="1"/>
</dbReference>
<dbReference type="SUPFAM" id="SSF54821">
    <property type="entry name" value="Ribosomal protein S3 C-terminal domain"/>
    <property type="match status" value="1"/>
</dbReference>
<dbReference type="PROSITE" id="PS50823">
    <property type="entry name" value="KH_TYPE_2"/>
    <property type="match status" value="1"/>
</dbReference>
<dbReference type="PROSITE" id="PS00548">
    <property type="entry name" value="RIBOSOMAL_S3"/>
    <property type="match status" value="1"/>
</dbReference>
<reference key="1">
    <citation type="submission" date="2009-06" db="EMBL/GenBank/DDBJ databases">
        <title>Complete sequence of Thermotogales bacterium TBF 19.5.1.</title>
        <authorList>
            <consortium name="US DOE Joint Genome Institute"/>
            <person name="Lucas S."/>
            <person name="Copeland A."/>
            <person name="Lapidus A."/>
            <person name="Glavina del Rio T."/>
            <person name="Tice H."/>
            <person name="Bruce D."/>
            <person name="Goodwin L."/>
            <person name="Pitluck S."/>
            <person name="Chertkov O."/>
            <person name="Brettin T."/>
            <person name="Detter J.C."/>
            <person name="Han C."/>
            <person name="Schmutz J."/>
            <person name="Larimer F."/>
            <person name="Land M."/>
            <person name="Hauser L."/>
            <person name="Kyrpides N."/>
            <person name="Ovchinnikova G."/>
            <person name="Noll K."/>
        </authorList>
    </citation>
    <scope>NUCLEOTIDE SEQUENCE [LARGE SCALE GENOMIC DNA]</scope>
    <source>
        <strain>ATCC BAA-1733 / DSM 21960 / TBF 19.5.1</strain>
    </source>
</reference>
<organism>
    <name type="scientific">Kosmotoga olearia (strain ATCC BAA-1733 / DSM 21960 / TBF 19.5.1)</name>
    <dbReference type="NCBI Taxonomy" id="521045"/>
    <lineage>
        <taxon>Bacteria</taxon>
        <taxon>Thermotogati</taxon>
        <taxon>Thermotogota</taxon>
        <taxon>Thermotogae</taxon>
        <taxon>Kosmotogales</taxon>
        <taxon>Kosmotogaceae</taxon>
        <taxon>Kosmotoga</taxon>
    </lineage>
</organism>
<gene>
    <name evidence="1" type="primary">rpsC</name>
    <name type="ordered locus">Kole_1896</name>
</gene>